<sequence>MEGLLIALIPMFAWGSIGFVSNKIGGRPNQQTFGMTLGALLFAIIVWLFKQPEMTASLWIFGILGGILWSVGQNGQFQAMKYMGVSVANPLSSGAQLVGGSLVGALVFHEWTKPIQFILGLTALTLLVIGFYFSSKRDVSEQALATHQEFSKGFATIAYSTVGYISYAVLFNNIMKFDAMAVILPMAVGMCLGAICFMKFRVNFEAVVVKNMITGLMWGVGNVFMLLAAAKAGLAIAFSFSQLGVIISIIGGILFLGETKTKKEQKWVVMGILCFVMGAILLGIVKSY</sequence>
<comment type="subcellular location">
    <subcellularLocation>
        <location evidence="2">Cell membrane</location>
        <topology evidence="2">Multi-pass membrane protein</topology>
    </subcellularLocation>
</comment>
<comment type="similarity">
    <text evidence="2">Belongs to the GRP transporter (TC 2.A.7.5) family.</text>
</comment>
<protein>
    <recommendedName>
        <fullName>Putative sugar uptake protein gbs2116</fullName>
    </recommendedName>
</protein>
<organism>
    <name type="scientific">Streptococcus agalactiae serotype III (strain NEM316)</name>
    <dbReference type="NCBI Taxonomy" id="211110"/>
    <lineage>
        <taxon>Bacteria</taxon>
        <taxon>Bacillati</taxon>
        <taxon>Bacillota</taxon>
        <taxon>Bacilli</taxon>
        <taxon>Lactobacillales</taxon>
        <taxon>Streptococcaceae</taxon>
        <taxon>Streptococcus</taxon>
    </lineage>
</organism>
<proteinExistence type="inferred from homology"/>
<gene>
    <name type="ordered locus">gbs2116</name>
</gene>
<evidence type="ECO:0000255" key="1"/>
<evidence type="ECO:0000305" key="2"/>
<keyword id="KW-1003">Cell membrane</keyword>
<keyword id="KW-0472">Membrane</keyword>
<keyword id="KW-0762">Sugar transport</keyword>
<keyword id="KW-0812">Transmembrane</keyword>
<keyword id="KW-1133">Transmembrane helix</keyword>
<keyword id="KW-0813">Transport</keyword>
<accession>Q8E2K6</accession>
<feature type="chain" id="PRO_0000213661" description="Putative sugar uptake protein gbs2116">
    <location>
        <begin position="1"/>
        <end position="288"/>
    </location>
</feature>
<feature type="transmembrane region" description="Helical" evidence="1">
    <location>
        <begin position="4"/>
        <end position="26"/>
    </location>
</feature>
<feature type="transmembrane region" description="Helical" evidence="1">
    <location>
        <begin position="33"/>
        <end position="50"/>
    </location>
</feature>
<feature type="transmembrane region" description="Helical" evidence="1">
    <location>
        <begin position="55"/>
        <end position="72"/>
    </location>
</feature>
<feature type="transmembrane region" description="Helical" evidence="1">
    <location>
        <begin position="85"/>
        <end position="107"/>
    </location>
</feature>
<feature type="transmembrane region" description="Helical" evidence="1">
    <location>
        <begin position="117"/>
        <end position="134"/>
    </location>
</feature>
<feature type="transmembrane region" description="Helical" evidence="1">
    <location>
        <begin position="154"/>
        <end position="171"/>
    </location>
</feature>
<feature type="transmembrane region" description="Helical" evidence="1">
    <location>
        <begin position="181"/>
        <end position="200"/>
    </location>
</feature>
<feature type="transmembrane region" description="Helical" evidence="1">
    <location>
        <begin position="207"/>
        <end position="229"/>
    </location>
</feature>
<feature type="transmembrane region" description="Helical" evidence="1">
    <location>
        <begin position="234"/>
        <end position="256"/>
    </location>
</feature>
<feature type="transmembrane region" description="Helical" evidence="1">
    <location>
        <begin position="268"/>
        <end position="285"/>
    </location>
</feature>
<reference key="1">
    <citation type="journal article" date="2002" name="Mol. Microbiol.">
        <title>Genome sequence of Streptococcus agalactiae, a pathogen causing invasive neonatal disease.</title>
        <authorList>
            <person name="Glaser P."/>
            <person name="Rusniok C."/>
            <person name="Buchrieser C."/>
            <person name="Chevalier F."/>
            <person name="Frangeul L."/>
            <person name="Msadek T."/>
            <person name="Zouine M."/>
            <person name="Couve E."/>
            <person name="Lalioui L."/>
            <person name="Poyart C."/>
            <person name="Trieu-Cuot P."/>
            <person name="Kunst F."/>
        </authorList>
    </citation>
    <scope>NUCLEOTIDE SEQUENCE [LARGE SCALE GENOMIC DNA]</scope>
    <source>
        <strain>NEM316</strain>
    </source>
</reference>
<name>Y2116_STRA3</name>
<dbReference type="EMBL" id="AL766856">
    <property type="protein sequence ID" value="CAD47775.1"/>
    <property type="molecule type" value="Genomic_DNA"/>
</dbReference>
<dbReference type="RefSeq" id="WP_000398683.1">
    <property type="nucleotide sequence ID" value="NC_004368.1"/>
</dbReference>
<dbReference type="SMR" id="Q8E2K6"/>
<dbReference type="KEGG" id="san:gbs2116"/>
<dbReference type="eggNOG" id="COG4975">
    <property type="taxonomic scope" value="Bacteria"/>
</dbReference>
<dbReference type="HOGENOM" id="CLU_076024_0_0_9"/>
<dbReference type="Proteomes" id="UP000000823">
    <property type="component" value="Chromosome"/>
</dbReference>
<dbReference type="GO" id="GO:0005886">
    <property type="term" value="C:plasma membrane"/>
    <property type="evidence" value="ECO:0007669"/>
    <property type="project" value="UniProtKB-SubCell"/>
</dbReference>
<dbReference type="GO" id="GO:0015144">
    <property type="term" value="F:carbohydrate transmembrane transporter activity"/>
    <property type="evidence" value="ECO:0007669"/>
    <property type="project" value="InterPro"/>
</dbReference>
<dbReference type="CDD" id="cd23110">
    <property type="entry name" value="GRP"/>
    <property type="match status" value="1"/>
</dbReference>
<dbReference type="InterPro" id="IPR010651">
    <property type="entry name" value="Sugar_transport"/>
</dbReference>
<dbReference type="PANTHER" id="PTHR16119">
    <property type="entry name" value="TRANSMEMBRANE PROTEIN 144"/>
    <property type="match status" value="1"/>
</dbReference>
<dbReference type="PANTHER" id="PTHR16119:SF17">
    <property type="entry name" value="TRANSMEMBRANE PROTEIN 144"/>
    <property type="match status" value="1"/>
</dbReference>
<dbReference type="Pfam" id="PF06800">
    <property type="entry name" value="Sugar_transport"/>
    <property type="match status" value="1"/>
</dbReference>
<dbReference type="SUPFAM" id="SSF103481">
    <property type="entry name" value="Multidrug resistance efflux transporter EmrE"/>
    <property type="match status" value="2"/>
</dbReference>